<name>NAC23_ORYSJ</name>
<reference key="1">
    <citation type="submission" date="2006-11" db="EMBL/GenBank/DDBJ databases">
        <title>Molecular cloning of OsNAC6 genes in rice seeds.</title>
        <authorList>
            <person name="Yoon U.H."/>
            <person name="Kim Y.H."/>
        </authorList>
    </citation>
    <scope>NUCLEOTIDE SEQUENCE [MRNA]</scope>
</reference>
<reference key="2">
    <citation type="journal article" date="2005" name="Nature">
        <title>The map-based sequence of the rice genome.</title>
        <authorList>
            <consortium name="International rice genome sequencing project (IRGSP)"/>
        </authorList>
    </citation>
    <scope>NUCLEOTIDE SEQUENCE [LARGE SCALE GENOMIC DNA]</scope>
    <source>
        <strain>cv. Nipponbare</strain>
    </source>
</reference>
<reference key="3">
    <citation type="journal article" date="2008" name="Nucleic Acids Res.">
        <title>The rice annotation project database (RAP-DB): 2008 update.</title>
        <authorList>
            <consortium name="The rice annotation project (RAP)"/>
        </authorList>
    </citation>
    <scope>GENOME REANNOTATION</scope>
    <source>
        <strain>cv. Nipponbare</strain>
    </source>
</reference>
<reference key="4">
    <citation type="journal article" date="2013" name="Rice">
        <title>Improvement of the Oryza sativa Nipponbare reference genome using next generation sequence and optical map data.</title>
        <authorList>
            <person name="Kawahara Y."/>
            <person name="de la Bastide M."/>
            <person name="Hamilton J.P."/>
            <person name="Kanamori H."/>
            <person name="McCombie W.R."/>
            <person name="Ouyang S."/>
            <person name="Schwartz D.C."/>
            <person name="Tanaka T."/>
            <person name="Wu J."/>
            <person name="Zhou S."/>
            <person name="Childs K.L."/>
            <person name="Davidson R.M."/>
            <person name="Lin H."/>
            <person name="Quesada-Ocampo L."/>
            <person name="Vaillancourt B."/>
            <person name="Sakai H."/>
            <person name="Lee S.S."/>
            <person name="Kim J."/>
            <person name="Numa H."/>
            <person name="Itoh T."/>
            <person name="Buell C.R."/>
            <person name="Matsumoto T."/>
        </authorList>
    </citation>
    <scope>GENOME REANNOTATION</scope>
    <source>
        <strain>cv. Nipponbare</strain>
    </source>
</reference>
<reference key="5">
    <citation type="journal article" date="2005" name="PLoS Biol.">
        <title>The genomes of Oryza sativa: a history of duplications.</title>
        <authorList>
            <person name="Yu J."/>
            <person name="Wang J."/>
            <person name="Lin W."/>
            <person name="Li S."/>
            <person name="Li H."/>
            <person name="Zhou J."/>
            <person name="Ni P."/>
            <person name="Dong W."/>
            <person name="Hu S."/>
            <person name="Zeng C."/>
            <person name="Zhang J."/>
            <person name="Zhang Y."/>
            <person name="Li R."/>
            <person name="Xu Z."/>
            <person name="Li S."/>
            <person name="Li X."/>
            <person name="Zheng H."/>
            <person name="Cong L."/>
            <person name="Lin L."/>
            <person name="Yin J."/>
            <person name="Geng J."/>
            <person name="Li G."/>
            <person name="Shi J."/>
            <person name="Liu J."/>
            <person name="Lv H."/>
            <person name="Li J."/>
            <person name="Wang J."/>
            <person name="Deng Y."/>
            <person name="Ran L."/>
            <person name="Shi X."/>
            <person name="Wang X."/>
            <person name="Wu Q."/>
            <person name="Li C."/>
            <person name="Ren X."/>
            <person name="Wang J."/>
            <person name="Wang X."/>
            <person name="Li D."/>
            <person name="Liu D."/>
            <person name="Zhang X."/>
            <person name="Ji Z."/>
            <person name="Zhao W."/>
            <person name="Sun Y."/>
            <person name="Zhang Z."/>
            <person name="Bao J."/>
            <person name="Han Y."/>
            <person name="Dong L."/>
            <person name="Ji J."/>
            <person name="Chen P."/>
            <person name="Wu S."/>
            <person name="Liu J."/>
            <person name="Xiao Y."/>
            <person name="Bu D."/>
            <person name="Tan J."/>
            <person name="Yang L."/>
            <person name="Ye C."/>
            <person name="Zhang J."/>
            <person name="Xu J."/>
            <person name="Zhou Y."/>
            <person name="Yu Y."/>
            <person name="Zhang B."/>
            <person name="Zhuang S."/>
            <person name="Wei H."/>
            <person name="Liu B."/>
            <person name="Lei M."/>
            <person name="Yu H."/>
            <person name="Li Y."/>
            <person name="Xu H."/>
            <person name="Wei S."/>
            <person name="He X."/>
            <person name="Fang L."/>
            <person name="Zhang Z."/>
            <person name="Zhang Y."/>
            <person name="Huang X."/>
            <person name="Su Z."/>
            <person name="Tong W."/>
            <person name="Li J."/>
            <person name="Tong Z."/>
            <person name="Li S."/>
            <person name="Ye J."/>
            <person name="Wang L."/>
            <person name="Fang L."/>
            <person name="Lei T."/>
            <person name="Chen C.-S."/>
            <person name="Chen H.-C."/>
            <person name="Xu Z."/>
            <person name="Li H."/>
            <person name="Huang H."/>
            <person name="Zhang F."/>
            <person name="Xu H."/>
            <person name="Li N."/>
            <person name="Zhao C."/>
            <person name="Li S."/>
            <person name="Dong L."/>
            <person name="Huang Y."/>
            <person name="Li L."/>
            <person name="Xi Y."/>
            <person name="Qi Q."/>
            <person name="Li W."/>
            <person name="Zhang B."/>
            <person name="Hu W."/>
            <person name="Zhang Y."/>
            <person name="Tian X."/>
            <person name="Jiao Y."/>
            <person name="Liang X."/>
            <person name="Jin J."/>
            <person name="Gao L."/>
            <person name="Zheng W."/>
            <person name="Hao B."/>
            <person name="Liu S.-M."/>
            <person name="Wang W."/>
            <person name="Yuan L."/>
            <person name="Cao M."/>
            <person name="McDermott J."/>
            <person name="Samudrala R."/>
            <person name="Wang J."/>
            <person name="Wong G.K.-S."/>
            <person name="Yang H."/>
        </authorList>
    </citation>
    <scope>NUCLEOTIDE SEQUENCE [LARGE SCALE GENOMIC DNA]</scope>
    <source>
        <strain>cv. Nipponbare</strain>
    </source>
</reference>
<reference key="6">
    <citation type="journal article" date="2003" name="Science">
        <title>Collection, mapping, and annotation of over 28,000 cDNA clones from japonica rice.</title>
        <authorList>
            <consortium name="The rice full-length cDNA consortium"/>
        </authorList>
    </citation>
    <scope>NUCLEOTIDE SEQUENCE [LARGE SCALE MRNA]</scope>
    <source>
        <strain>cv. Nipponbare</strain>
    </source>
</reference>
<reference key="7">
    <citation type="journal article" date="2003" name="DNA Res.">
        <title>Comprehensive analysis of NAC family genes in Oryza sativa and Arabidopsis thaliana.</title>
        <authorList>
            <person name="Ooka H."/>
            <person name="Satoh K."/>
            <person name="Doi K."/>
            <person name="Nagata T."/>
            <person name="Otomo Y."/>
            <person name="Murakami K."/>
            <person name="Matsubara K."/>
            <person name="Osato N."/>
            <person name="Kawai J."/>
            <person name="Carninci P."/>
            <person name="Hayashizaki Y."/>
            <person name="Suzuki K."/>
            <person name="Kojima K."/>
            <person name="Takahara Y."/>
            <person name="Yamamoto K."/>
            <person name="Kikuchi S."/>
        </authorList>
    </citation>
    <scope>GENE FAMILY</scope>
    <scope>NOMENCLATURE</scope>
</reference>
<reference key="8">
    <citation type="journal article" date="2007" name="Planta">
        <title>Characterization and identification of the candidate gene of rice thermo-sensitive genic male sterile gene tms5 by mapping.</title>
        <authorList>
            <person name="Yang Q."/>
            <person name="Liang C."/>
            <person name="Zhuang W."/>
            <person name="Li J."/>
            <person name="Deng H."/>
            <person name="Deng Q."/>
            <person name="Wang B."/>
        </authorList>
    </citation>
    <scope>TISSUE SPECIFICITY</scope>
</reference>
<reference key="9">
    <citation type="journal article" date="2008" name="Mol. Genet. Genomics">
        <title>Systematic sequence analysis and identification of tissue-specific or stress-responsive genes of NAC transcription factor family in rice.</title>
        <authorList>
            <person name="Fang Y."/>
            <person name="You J."/>
            <person name="Xie K."/>
            <person name="Xie W."/>
            <person name="Xiong L."/>
        </authorList>
    </citation>
    <scope>TISSUE SPECIFICITY</scope>
</reference>
<reference key="10">
    <citation type="journal article" date="2016" name="Front. Plant Sci.">
        <title>Three rice NAC transcription factors heteromerize and are associated with seed size.</title>
        <authorList>
            <person name="Mathew I.E."/>
            <person name="Das S."/>
            <person name="Mahto A."/>
            <person name="Agarwal P."/>
        </authorList>
    </citation>
    <scope>INTERACTION WITH NAC26</scope>
    <scope>SUBCELLULAR LOCATION</scope>
</reference>
<dbReference type="EMBL" id="EF122479">
    <property type="protein sequence ID" value="ABL74566.1"/>
    <property type="molecule type" value="mRNA"/>
</dbReference>
<dbReference type="EMBL" id="AP004039">
    <property type="protein sequence ID" value="BAD25040.1"/>
    <property type="molecule type" value="Genomic_DNA"/>
</dbReference>
<dbReference type="EMBL" id="AP008208">
    <property type="protein sequence ID" value="BAF08196.1"/>
    <property type="molecule type" value="Genomic_DNA"/>
</dbReference>
<dbReference type="EMBL" id="AP014958">
    <property type="protein sequence ID" value="BAS77622.1"/>
    <property type="molecule type" value="Genomic_DNA"/>
</dbReference>
<dbReference type="EMBL" id="CM000139">
    <property type="protein sequence ID" value="EAZ22224.1"/>
    <property type="molecule type" value="Genomic_DNA"/>
</dbReference>
<dbReference type="EMBL" id="AK107283">
    <property type="protein sequence ID" value="BAG98022.1"/>
    <property type="molecule type" value="mRNA"/>
</dbReference>
<dbReference type="SMR" id="Q6H8A9"/>
<dbReference type="FunCoup" id="Q6H8A9">
    <property type="interactions" value="200"/>
</dbReference>
<dbReference type="STRING" id="39947.Q6H8A9"/>
<dbReference type="iPTMnet" id="Q6H8A9"/>
<dbReference type="PaxDb" id="39947-Q6H8A9"/>
<dbReference type="EnsemblPlants" id="Os02t0214500-01">
    <property type="protein sequence ID" value="Os02t0214500-01"/>
    <property type="gene ID" value="Os02g0214500"/>
</dbReference>
<dbReference type="GeneID" id="4328715"/>
<dbReference type="Gramene" id="Os02t0214500-01">
    <property type="protein sequence ID" value="Os02t0214500-01"/>
    <property type="gene ID" value="Os02g0214500"/>
</dbReference>
<dbReference type="KEGG" id="dosa:Os02g0214500"/>
<dbReference type="KEGG" id="osa:4328715"/>
<dbReference type="eggNOG" id="ENOG502QSIY">
    <property type="taxonomic scope" value="Eukaryota"/>
</dbReference>
<dbReference type="HOGENOM" id="CLU_035664_10_0_1"/>
<dbReference type="InParanoid" id="Q6H8A9"/>
<dbReference type="OMA" id="MHEYCLT"/>
<dbReference type="OrthoDB" id="10346317at2759"/>
<dbReference type="Proteomes" id="UP000000763">
    <property type="component" value="Chromosome 2"/>
</dbReference>
<dbReference type="Proteomes" id="UP000007752">
    <property type="component" value="Chromosome 2"/>
</dbReference>
<dbReference type="Proteomes" id="UP000059680">
    <property type="component" value="Chromosome 2"/>
</dbReference>
<dbReference type="GO" id="GO:0005737">
    <property type="term" value="C:cytoplasm"/>
    <property type="evidence" value="ECO:0000314"/>
    <property type="project" value="UniProtKB"/>
</dbReference>
<dbReference type="GO" id="GO:0005634">
    <property type="term" value="C:nucleus"/>
    <property type="evidence" value="ECO:0007669"/>
    <property type="project" value="UniProtKB-SubCell"/>
</dbReference>
<dbReference type="GO" id="GO:0043565">
    <property type="term" value="F:sequence-specific DNA binding"/>
    <property type="evidence" value="ECO:0000314"/>
    <property type="project" value="UniProtKB"/>
</dbReference>
<dbReference type="GO" id="GO:0006355">
    <property type="term" value="P:regulation of DNA-templated transcription"/>
    <property type="evidence" value="ECO:0007669"/>
    <property type="project" value="InterPro"/>
</dbReference>
<dbReference type="GO" id="GO:0080050">
    <property type="term" value="P:regulation of seed development"/>
    <property type="evidence" value="ECO:0000250"/>
    <property type="project" value="UniProtKB"/>
</dbReference>
<dbReference type="Gene3D" id="2.170.150.80">
    <property type="entry name" value="NAC domain"/>
    <property type="match status" value="1"/>
</dbReference>
<dbReference type="InterPro" id="IPR003441">
    <property type="entry name" value="NAC-dom"/>
</dbReference>
<dbReference type="InterPro" id="IPR036093">
    <property type="entry name" value="NAC_dom_sf"/>
</dbReference>
<dbReference type="PANTHER" id="PTHR31719">
    <property type="entry name" value="NAC TRANSCRIPTION FACTOR 56"/>
    <property type="match status" value="1"/>
</dbReference>
<dbReference type="PANTHER" id="PTHR31719:SF94">
    <property type="entry name" value="PROTEIN ATAF2"/>
    <property type="match status" value="1"/>
</dbReference>
<dbReference type="Pfam" id="PF02365">
    <property type="entry name" value="NAM"/>
    <property type="match status" value="1"/>
</dbReference>
<dbReference type="SUPFAM" id="SSF101941">
    <property type="entry name" value="NAC domain"/>
    <property type="match status" value="1"/>
</dbReference>
<dbReference type="PROSITE" id="PS51005">
    <property type="entry name" value="NAC"/>
    <property type="match status" value="1"/>
</dbReference>
<accession>Q6H8A9</accession>
<accession>Q0E2U2</accession>
<proteinExistence type="evidence at protein level"/>
<gene>
    <name evidence="7" type="primary">NAC23</name>
    <name evidence="10" type="synonym">NAC6</name>
    <name evidence="8" type="synonym">TMS5</name>
    <name evidence="12" type="ordered locus">Os02g0214500</name>
    <name evidence="9" type="ordered locus">LOC_Os02g12310</name>
    <name evidence="11" type="ORF">OJ1006_D05.18</name>
    <name evidence="13" type="ORF">OsJ_05880</name>
</gene>
<feature type="chain" id="PRO_0000452672" description="NAC domain-containing protein 23">
    <location>
        <begin position="1"/>
        <end position="252"/>
    </location>
</feature>
<feature type="domain" description="NAC" evidence="2">
    <location>
        <begin position="12"/>
        <end position="177"/>
    </location>
</feature>
<feature type="DNA-binding region" evidence="2">
    <location>
        <begin position="110"/>
        <end position="183"/>
    </location>
</feature>
<feature type="region of interest" description="Disordered" evidence="3">
    <location>
        <begin position="225"/>
        <end position="252"/>
    </location>
</feature>
<feature type="compositionally biased region" description="Acidic residues" evidence="3">
    <location>
        <begin position="234"/>
        <end position="244"/>
    </location>
</feature>
<organism>
    <name type="scientific">Oryza sativa subsp. japonica</name>
    <name type="common">Rice</name>
    <dbReference type="NCBI Taxonomy" id="39947"/>
    <lineage>
        <taxon>Eukaryota</taxon>
        <taxon>Viridiplantae</taxon>
        <taxon>Streptophyta</taxon>
        <taxon>Embryophyta</taxon>
        <taxon>Tracheophyta</taxon>
        <taxon>Spermatophyta</taxon>
        <taxon>Magnoliopsida</taxon>
        <taxon>Liliopsida</taxon>
        <taxon>Poales</taxon>
        <taxon>Poaceae</taxon>
        <taxon>BOP clade</taxon>
        <taxon>Oryzoideae</taxon>
        <taxon>Oryzeae</taxon>
        <taxon>Oryzinae</taxon>
        <taxon>Oryza</taxon>
        <taxon>Oryza sativa</taxon>
    </lineage>
</organism>
<keyword id="KW-0963">Cytoplasm</keyword>
<keyword id="KW-0238">DNA-binding</keyword>
<keyword id="KW-0539">Nucleus</keyword>
<keyword id="KW-1185">Reference proteome</keyword>
<keyword id="KW-0804">Transcription</keyword>
<keyword id="KW-0805">Transcription regulation</keyword>
<protein>
    <recommendedName>
        <fullName evidence="7">NAC domain-containing protein 23</fullName>
        <shortName evidence="7">ONAC023</shortName>
    </recommendedName>
    <alternativeName>
        <fullName evidence="10">OsNAC6</fullName>
    </alternativeName>
    <alternativeName>
        <fullName evidence="8">Protein THERMOSENSITIVE MALE STERILITY 5</fullName>
    </alternativeName>
</protein>
<evidence type="ECO:0000250" key="1">
    <source>
        <dbReference type="UniProtKB" id="B8AE67"/>
    </source>
</evidence>
<evidence type="ECO:0000255" key="2">
    <source>
        <dbReference type="PROSITE-ProRule" id="PRU00353"/>
    </source>
</evidence>
<evidence type="ECO:0000256" key="3">
    <source>
        <dbReference type="SAM" id="MobiDB-lite"/>
    </source>
</evidence>
<evidence type="ECO:0000269" key="4">
    <source>
    </source>
</evidence>
<evidence type="ECO:0000269" key="5">
    <source>
    </source>
</evidence>
<evidence type="ECO:0000269" key="6">
    <source>
    </source>
</evidence>
<evidence type="ECO:0000303" key="7">
    <source>
    </source>
</evidence>
<evidence type="ECO:0000303" key="8">
    <source>
    </source>
</evidence>
<evidence type="ECO:0000305" key="9"/>
<evidence type="ECO:0000312" key="10">
    <source>
        <dbReference type="EMBL" id="ABL74566.1"/>
    </source>
</evidence>
<evidence type="ECO:0000312" key="11">
    <source>
        <dbReference type="EMBL" id="BAD25040.1"/>
    </source>
</evidence>
<evidence type="ECO:0000312" key="12">
    <source>
        <dbReference type="EMBL" id="BAS77622.1"/>
    </source>
</evidence>
<evidence type="ECO:0000312" key="13">
    <source>
        <dbReference type="EMBL" id="EAZ22224.1"/>
    </source>
</evidence>
<sequence length="252" mass="28163">MAMTPQLAFSRMPPGFRFQPTDEQLVVDYLQRRTAAQPCVTPDITDIDVYNVDPWQLPAMAMYGSDHDRYFFTMAAREAQARRTTPSGFWKPTGTKKTIFVVAGGHEVPTAVKRRFVFYLGHHQPSGSNNNNKTSWIMHEYRLMNSPRAAVPSSSSVNRLPTDDLTEEMVLCRISNKDLPKPPFIHNSLLQFSSVGLNGDGYNYLILDHLEPPAMEYPNVGIGNVDDAAAGTDDPGDLDEEIDDSMQRNHGG</sequence>
<comment type="function">
    <text evidence="1 5">Transcription factor involved in the regulation of seed size (By similarity). Binds to DNA-specific sequences of CLPD1 and OAT promoters in vitro (PubMed:18813954).</text>
</comment>
<comment type="subunit">
    <text evidence="6">Forms heterodimers with NAC26.</text>
</comment>
<comment type="subcellular location">
    <subcellularLocation>
        <location evidence="2">Nucleus</location>
    </subcellularLocation>
    <subcellularLocation>
        <location evidence="6">Cytoplasm</location>
    </subcellularLocation>
</comment>
<comment type="tissue specificity">
    <text evidence="4 5">Expressed in stems and panicles (PubMed:16896793). Expressed in developing endosperm (PubMed:18813954).</text>
</comment>
<comment type="domain">
    <text evidence="2">The NAC domain includes a DNA binding domain and a dimerization domain.</text>
</comment>